<protein>
    <recommendedName>
        <fullName evidence="2">Large ribosomal subunit protein mL53</fullName>
    </recommendedName>
    <alternativeName>
        <fullName>54S ribosomal protein L44, mitochondrial</fullName>
    </alternativeName>
</protein>
<dbReference type="EMBL" id="CU329671">
    <property type="protein sequence ID" value="CAG17623.1"/>
    <property type="molecule type" value="Genomic_DNA"/>
</dbReference>
<dbReference type="RefSeq" id="NP_001018846.1">
    <property type="nucleotide sequence ID" value="NM_001022642.2"/>
</dbReference>
<dbReference type="SMR" id="P62506"/>
<dbReference type="ComplexPortal" id="CPX-10323">
    <property type="entry name" value="54S mitochondrial large ribosomal subunit"/>
</dbReference>
<dbReference type="FunCoup" id="P62506">
    <property type="interactions" value="31"/>
</dbReference>
<dbReference type="STRING" id="284812.P62506"/>
<dbReference type="PaxDb" id="4896-SPBC56F2.14.1"/>
<dbReference type="EnsemblFungi" id="SPBC56F2.14.1">
    <property type="protein sequence ID" value="SPBC56F2.14.1:pep"/>
    <property type="gene ID" value="SPBC56F2.14"/>
</dbReference>
<dbReference type="GeneID" id="3361356"/>
<dbReference type="KEGG" id="spo:3361356"/>
<dbReference type="PomBase" id="SPBC56F2.14">
    <property type="gene designation" value="mrpl44"/>
</dbReference>
<dbReference type="VEuPathDB" id="FungiDB:SPBC56F2.14"/>
<dbReference type="HOGENOM" id="CLU_131037_1_0_1"/>
<dbReference type="InParanoid" id="P62506"/>
<dbReference type="OMA" id="KMNIGRL"/>
<dbReference type="PhylomeDB" id="P62506"/>
<dbReference type="PRO" id="PR:P62506"/>
<dbReference type="Proteomes" id="UP000002485">
    <property type="component" value="Chromosome II"/>
</dbReference>
<dbReference type="GO" id="GO:0005762">
    <property type="term" value="C:mitochondrial large ribosomal subunit"/>
    <property type="evidence" value="ECO:0000318"/>
    <property type="project" value="GO_Central"/>
</dbReference>
<dbReference type="GO" id="GO:0003735">
    <property type="term" value="F:structural constituent of ribosome"/>
    <property type="evidence" value="ECO:0000318"/>
    <property type="project" value="GO_Central"/>
</dbReference>
<dbReference type="GO" id="GO:0032543">
    <property type="term" value="P:mitochondrial translation"/>
    <property type="evidence" value="ECO:0000250"/>
    <property type="project" value="PomBase"/>
</dbReference>
<dbReference type="FunFam" id="3.40.30.10:FF:000260">
    <property type="entry name" value="Mitochondrial ribosomal protein L44"/>
    <property type="match status" value="1"/>
</dbReference>
<dbReference type="Gene3D" id="3.40.30.10">
    <property type="entry name" value="Glutaredoxin"/>
    <property type="match status" value="1"/>
</dbReference>
<dbReference type="InterPro" id="IPR019716">
    <property type="entry name" value="Ribosomal_mL53"/>
</dbReference>
<dbReference type="InterPro" id="IPR042776">
    <property type="entry name" value="Ribosomal_mL53_fung"/>
</dbReference>
<dbReference type="PANTHER" id="PTHR28236">
    <property type="entry name" value="54S RIBOSOMAL PROTEIN L44, MITOCHONDRIAL"/>
    <property type="match status" value="1"/>
</dbReference>
<dbReference type="PANTHER" id="PTHR28236:SF1">
    <property type="entry name" value="LARGE RIBOSOMAL SUBUNIT PROTEIN ML53"/>
    <property type="match status" value="1"/>
</dbReference>
<dbReference type="Pfam" id="PF10780">
    <property type="entry name" value="MRP_L53"/>
    <property type="match status" value="1"/>
</dbReference>
<evidence type="ECO:0000250" key="1">
    <source>
        <dbReference type="UniProtKB" id="P19956"/>
    </source>
</evidence>
<evidence type="ECO:0000305" key="2"/>
<gene>
    <name type="primary">mrpl44</name>
    <name type="ORF">SPBC56F2.14</name>
</gene>
<feature type="chain" id="PRO_0000087695" description="Large ribosomal subunit protein mL53">
    <location>
        <begin position="1"/>
        <end position="100"/>
    </location>
</feature>
<comment type="function">
    <text evidence="1">Component of the mitochondrial ribosome (mitoribosome), a dedicated translation machinery responsible for the synthesis of mitochondrial genome-encoded proteins, including at least some of the essential transmembrane subunits of the mitochondrial respiratory chain. The mitoribosomes are attached to the mitochondrial inner membrane and translation products are cotranslationally integrated into the membrane.</text>
</comment>
<comment type="subunit">
    <text evidence="1">Component of the mitochondrial large ribosomal subunit (mt-LSU). Mature yeast 74S mitochondrial ribosomes consist of a small (37S) and a large (54S) subunit. The 37S small subunit contains a 15S ribosomal RNA (15S mt-rRNA) and at least 32 different proteins. The 54S large subunit contains a 21S rRNA (21S mt-rRNA) and at least 45 different proteins.</text>
</comment>
<comment type="subcellular location">
    <subcellularLocation>
        <location evidence="1">Mitochondrion</location>
    </subcellularLocation>
</comment>
<comment type="similarity">
    <text evidence="2">Belongs to the mitochondrion-specific ribosomal protein mL53 family.</text>
</comment>
<sequence length="100" mass="11107">MIFGYINKLSILNVNPFSKASQSAKLLLAVASKETSNSLYGLNLITSLASKDTNSKPSVEVVYKDGKKLTVDPTKMNIGRLTELIDDYSKTLKFKEMMQK</sequence>
<reference key="1">
    <citation type="journal article" date="2002" name="Nature">
        <title>The genome sequence of Schizosaccharomyces pombe.</title>
        <authorList>
            <person name="Wood V."/>
            <person name="Gwilliam R."/>
            <person name="Rajandream M.A."/>
            <person name="Lyne M.H."/>
            <person name="Lyne R."/>
            <person name="Stewart A."/>
            <person name="Sgouros J.G."/>
            <person name="Peat N."/>
            <person name="Hayles J."/>
            <person name="Baker S.G."/>
            <person name="Basham D."/>
            <person name="Bowman S."/>
            <person name="Brooks K."/>
            <person name="Brown D."/>
            <person name="Brown S."/>
            <person name="Chillingworth T."/>
            <person name="Churcher C.M."/>
            <person name="Collins M."/>
            <person name="Connor R."/>
            <person name="Cronin A."/>
            <person name="Davis P."/>
            <person name="Feltwell T."/>
            <person name="Fraser A."/>
            <person name="Gentles S."/>
            <person name="Goble A."/>
            <person name="Hamlin N."/>
            <person name="Harris D.E."/>
            <person name="Hidalgo J."/>
            <person name="Hodgson G."/>
            <person name="Holroyd S."/>
            <person name="Hornsby T."/>
            <person name="Howarth S."/>
            <person name="Huckle E.J."/>
            <person name="Hunt S."/>
            <person name="Jagels K."/>
            <person name="James K.D."/>
            <person name="Jones L."/>
            <person name="Jones M."/>
            <person name="Leather S."/>
            <person name="McDonald S."/>
            <person name="McLean J."/>
            <person name="Mooney P."/>
            <person name="Moule S."/>
            <person name="Mungall K.L."/>
            <person name="Murphy L.D."/>
            <person name="Niblett D."/>
            <person name="Odell C."/>
            <person name="Oliver K."/>
            <person name="O'Neil S."/>
            <person name="Pearson D."/>
            <person name="Quail M.A."/>
            <person name="Rabbinowitsch E."/>
            <person name="Rutherford K.M."/>
            <person name="Rutter S."/>
            <person name="Saunders D."/>
            <person name="Seeger K."/>
            <person name="Sharp S."/>
            <person name="Skelton J."/>
            <person name="Simmonds M.N."/>
            <person name="Squares R."/>
            <person name="Squares S."/>
            <person name="Stevens K."/>
            <person name="Taylor K."/>
            <person name="Taylor R.G."/>
            <person name="Tivey A."/>
            <person name="Walsh S.V."/>
            <person name="Warren T."/>
            <person name="Whitehead S."/>
            <person name="Woodward J.R."/>
            <person name="Volckaert G."/>
            <person name="Aert R."/>
            <person name="Robben J."/>
            <person name="Grymonprez B."/>
            <person name="Weltjens I."/>
            <person name="Vanstreels E."/>
            <person name="Rieger M."/>
            <person name="Schaefer M."/>
            <person name="Mueller-Auer S."/>
            <person name="Gabel C."/>
            <person name="Fuchs M."/>
            <person name="Duesterhoeft A."/>
            <person name="Fritzc C."/>
            <person name="Holzer E."/>
            <person name="Moestl D."/>
            <person name="Hilbert H."/>
            <person name="Borzym K."/>
            <person name="Langer I."/>
            <person name="Beck A."/>
            <person name="Lehrach H."/>
            <person name="Reinhardt R."/>
            <person name="Pohl T.M."/>
            <person name="Eger P."/>
            <person name="Zimmermann W."/>
            <person name="Wedler H."/>
            <person name="Wambutt R."/>
            <person name="Purnelle B."/>
            <person name="Goffeau A."/>
            <person name="Cadieu E."/>
            <person name="Dreano S."/>
            <person name="Gloux S."/>
            <person name="Lelaure V."/>
            <person name="Mottier S."/>
            <person name="Galibert F."/>
            <person name="Aves S.J."/>
            <person name="Xiang Z."/>
            <person name="Hunt C."/>
            <person name="Moore K."/>
            <person name="Hurst S.M."/>
            <person name="Lucas M."/>
            <person name="Rochet M."/>
            <person name="Gaillardin C."/>
            <person name="Tallada V.A."/>
            <person name="Garzon A."/>
            <person name="Thode G."/>
            <person name="Daga R.R."/>
            <person name="Cruzado L."/>
            <person name="Jimenez J."/>
            <person name="Sanchez M."/>
            <person name="del Rey F."/>
            <person name="Benito J."/>
            <person name="Dominguez A."/>
            <person name="Revuelta J.L."/>
            <person name="Moreno S."/>
            <person name="Armstrong J."/>
            <person name="Forsburg S.L."/>
            <person name="Cerutti L."/>
            <person name="Lowe T."/>
            <person name="McCombie W.R."/>
            <person name="Paulsen I."/>
            <person name="Potashkin J."/>
            <person name="Shpakovski G.V."/>
            <person name="Ussery D."/>
            <person name="Barrell B.G."/>
            <person name="Nurse P."/>
        </authorList>
    </citation>
    <scope>NUCLEOTIDE SEQUENCE [LARGE SCALE GENOMIC DNA]</scope>
    <source>
        <strain>972 / ATCC 24843</strain>
    </source>
</reference>
<proteinExistence type="inferred from homology"/>
<organism>
    <name type="scientific">Schizosaccharomyces pombe (strain 972 / ATCC 24843)</name>
    <name type="common">Fission yeast</name>
    <dbReference type="NCBI Taxonomy" id="284812"/>
    <lineage>
        <taxon>Eukaryota</taxon>
        <taxon>Fungi</taxon>
        <taxon>Dikarya</taxon>
        <taxon>Ascomycota</taxon>
        <taxon>Taphrinomycotina</taxon>
        <taxon>Schizosaccharomycetes</taxon>
        <taxon>Schizosaccharomycetales</taxon>
        <taxon>Schizosaccharomycetaceae</taxon>
        <taxon>Schizosaccharomyces</taxon>
    </lineage>
</organism>
<accession>P62506</accession>
<accession>Q7LL05</accession>
<name>RM44_SCHPO</name>
<keyword id="KW-0496">Mitochondrion</keyword>
<keyword id="KW-1185">Reference proteome</keyword>
<keyword id="KW-0687">Ribonucleoprotein</keyword>
<keyword id="KW-0689">Ribosomal protein</keyword>